<accession>Q8CTX1</accession>
<comment type="catalytic activity">
    <reaction>
        <text>hydrogencarbonate + NH4(+) + ATP = carbamoyl phosphate + ADP + H2O + H(+)</text>
        <dbReference type="Rhea" id="RHEA:10152"/>
        <dbReference type="ChEBI" id="CHEBI:15377"/>
        <dbReference type="ChEBI" id="CHEBI:15378"/>
        <dbReference type="ChEBI" id="CHEBI:17544"/>
        <dbReference type="ChEBI" id="CHEBI:28938"/>
        <dbReference type="ChEBI" id="CHEBI:30616"/>
        <dbReference type="ChEBI" id="CHEBI:58228"/>
        <dbReference type="ChEBI" id="CHEBI:456216"/>
        <dbReference type="EC" id="2.7.2.2"/>
    </reaction>
</comment>
<comment type="pathway">
    <text>Metabolic intermediate metabolism; carbamoyl phosphate degradation; CO(2) and NH(3) from carbamoyl phosphate: step 1/1.</text>
</comment>
<comment type="subcellular location">
    <subcellularLocation>
        <location evidence="1">Cytoplasm</location>
    </subcellularLocation>
</comment>
<comment type="similarity">
    <text evidence="1">Belongs to the carbamate kinase family.</text>
</comment>
<gene>
    <name type="primary">arcC1</name>
    <name type="ordered locus">SE_0228</name>
</gene>
<dbReference type="EC" id="2.7.2.2"/>
<dbReference type="EMBL" id="AE015929">
    <property type="protein sequence ID" value="AAO03825.1"/>
    <property type="molecule type" value="Genomic_DNA"/>
</dbReference>
<dbReference type="RefSeq" id="NP_763783.1">
    <property type="nucleotide sequence ID" value="NC_004461.1"/>
</dbReference>
<dbReference type="SMR" id="Q8CTX1"/>
<dbReference type="KEGG" id="sep:SE_0228"/>
<dbReference type="PATRIC" id="fig|176280.10.peg.207"/>
<dbReference type="eggNOG" id="COG0549">
    <property type="taxonomic scope" value="Bacteria"/>
</dbReference>
<dbReference type="HOGENOM" id="CLU_076278_0_0_9"/>
<dbReference type="OrthoDB" id="9766717at2"/>
<dbReference type="UniPathway" id="UPA00996">
    <property type="reaction ID" value="UER00366"/>
</dbReference>
<dbReference type="Proteomes" id="UP000001411">
    <property type="component" value="Chromosome"/>
</dbReference>
<dbReference type="GO" id="GO:0005829">
    <property type="term" value="C:cytosol"/>
    <property type="evidence" value="ECO:0007669"/>
    <property type="project" value="TreeGrafter"/>
</dbReference>
<dbReference type="GO" id="GO:0005524">
    <property type="term" value="F:ATP binding"/>
    <property type="evidence" value="ECO:0007669"/>
    <property type="project" value="UniProtKB-KW"/>
</dbReference>
<dbReference type="GO" id="GO:0008804">
    <property type="term" value="F:carbamate kinase activity"/>
    <property type="evidence" value="ECO:0007669"/>
    <property type="project" value="UniProtKB-EC"/>
</dbReference>
<dbReference type="GO" id="GO:0019546">
    <property type="term" value="P:arginine deiminase pathway"/>
    <property type="evidence" value="ECO:0007669"/>
    <property type="project" value="TreeGrafter"/>
</dbReference>
<dbReference type="CDD" id="cd04235">
    <property type="entry name" value="AAK_CK"/>
    <property type="match status" value="1"/>
</dbReference>
<dbReference type="FunFam" id="3.40.1160.10:FF:000007">
    <property type="entry name" value="Carbamate kinase"/>
    <property type="match status" value="1"/>
</dbReference>
<dbReference type="Gene3D" id="3.40.1160.10">
    <property type="entry name" value="Acetylglutamate kinase-like"/>
    <property type="match status" value="1"/>
</dbReference>
<dbReference type="InterPro" id="IPR036393">
    <property type="entry name" value="AceGlu_kinase-like_sf"/>
</dbReference>
<dbReference type="InterPro" id="IPR001048">
    <property type="entry name" value="Asp/Glu/Uridylate_kinase"/>
</dbReference>
<dbReference type="InterPro" id="IPR003964">
    <property type="entry name" value="Carb_kinase"/>
</dbReference>
<dbReference type="NCBIfam" id="TIGR00746">
    <property type="entry name" value="arcC"/>
    <property type="match status" value="1"/>
</dbReference>
<dbReference type="NCBIfam" id="NF009007">
    <property type="entry name" value="PRK12352.1"/>
    <property type="match status" value="1"/>
</dbReference>
<dbReference type="PANTHER" id="PTHR30409">
    <property type="entry name" value="CARBAMATE KINASE"/>
    <property type="match status" value="1"/>
</dbReference>
<dbReference type="PANTHER" id="PTHR30409:SF1">
    <property type="entry name" value="CARBAMATE KINASE-RELATED"/>
    <property type="match status" value="1"/>
</dbReference>
<dbReference type="Pfam" id="PF00696">
    <property type="entry name" value="AA_kinase"/>
    <property type="match status" value="1"/>
</dbReference>
<dbReference type="PIRSF" id="PIRSF000723">
    <property type="entry name" value="Carbamate_kin"/>
    <property type="match status" value="1"/>
</dbReference>
<dbReference type="PRINTS" id="PR01469">
    <property type="entry name" value="CARBMTKINASE"/>
</dbReference>
<dbReference type="SUPFAM" id="SSF53633">
    <property type="entry name" value="Carbamate kinase-like"/>
    <property type="match status" value="1"/>
</dbReference>
<feature type="chain" id="PRO_0000269244" description="Carbamate kinase 1">
    <location>
        <begin position="1"/>
        <end position="310"/>
    </location>
</feature>
<sequence length="310" mass="33545">MAKIVVALGGNALGKSPQEQLELVKNTAKSLVGLITKGHEIVISHGNGPQVGSINLGLNYAAEHDQGPAFPFAECGAMSQAYIGYQLQESLQNELHSMGIDKQVVTLVTQVEVDEGDPAFNSPSKPIGLFYTKEEANRIQQEKGYQFVEDAGRGYRRVVPSPQPISIIELESIKTLVENDTLVIAAGGGGIPVIREQHDSFKGIDAVIDKDKTSALLGADIHCDQLIILTAIDYVYINYHTDQQQALKTTNIDTLKTYIEEKQFAKGSMLPKIESAISFIENNPNGSVLITSLNQLDAALEGKIGTLITK</sequence>
<protein>
    <recommendedName>
        <fullName>Carbamate kinase 1</fullName>
        <ecNumber>2.7.2.2</ecNumber>
    </recommendedName>
</protein>
<name>ARCC1_STAES</name>
<proteinExistence type="inferred from homology"/>
<organism>
    <name type="scientific">Staphylococcus epidermidis (strain ATCC 12228 / FDA PCI 1200)</name>
    <dbReference type="NCBI Taxonomy" id="176280"/>
    <lineage>
        <taxon>Bacteria</taxon>
        <taxon>Bacillati</taxon>
        <taxon>Bacillota</taxon>
        <taxon>Bacilli</taxon>
        <taxon>Bacillales</taxon>
        <taxon>Staphylococcaceae</taxon>
        <taxon>Staphylococcus</taxon>
    </lineage>
</organism>
<reference key="1">
    <citation type="journal article" date="2003" name="Mol. Microbiol.">
        <title>Genome-based analysis of virulence genes in a non-biofilm-forming Staphylococcus epidermidis strain (ATCC 12228).</title>
        <authorList>
            <person name="Zhang Y.-Q."/>
            <person name="Ren S.-X."/>
            <person name="Li H.-L."/>
            <person name="Wang Y.-X."/>
            <person name="Fu G."/>
            <person name="Yang J."/>
            <person name="Qin Z.-Q."/>
            <person name="Miao Y.-G."/>
            <person name="Wang W.-Y."/>
            <person name="Chen R.-S."/>
            <person name="Shen Y."/>
            <person name="Chen Z."/>
            <person name="Yuan Z.-H."/>
            <person name="Zhao G.-P."/>
            <person name="Qu D."/>
            <person name="Danchin A."/>
            <person name="Wen Y.-M."/>
        </authorList>
    </citation>
    <scope>NUCLEOTIDE SEQUENCE [LARGE SCALE GENOMIC DNA]</scope>
    <source>
        <strain>ATCC 12228 / FDA PCI 1200</strain>
    </source>
</reference>
<keyword id="KW-0056">Arginine metabolism</keyword>
<keyword id="KW-0067">ATP-binding</keyword>
<keyword id="KW-0963">Cytoplasm</keyword>
<keyword id="KW-0418">Kinase</keyword>
<keyword id="KW-0547">Nucleotide-binding</keyword>
<keyword id="KW-0808">Transferase</keyword>
<evidence type="ECO:0000305" key="1"/>